<organism>
    <name type="scientific">Rhodopseudomonas palustris (strain BisB18)</name>
    <dbReference type="NCBI Taxonomy" id="316056"/>
    <lineage>
        <taxon>Bacteria</taxon>
        <taxon>Pseudomonadati</taxon>
        <taxon>Pseudomonadota</taxon>
        <taxon>Alphaproteobacteria</taxon>
        <taxon>Hyphomicrobiales</taxon>
        <taxon>Nitrobacteraceae</taxon>
        <taxon>Rhodopseudomonas</taxon>
    </lineage>
</organism>
<comment type="function">
    <text evidence="1">One of the primary rRNA binding proteins, it binds directly to 16S rRNA where it nucleates assembly of the head domain of the 30S subunit. Is located at the subunit interface close to the decoding center, probably blocks exit of the E-site tRNA.</text>
</comment>
<comment type="subunit">
    <text evidence="1">Part of the 30S ribosomal subunit. Contacts proteins S9 and S11.</text>
</comment>
<comment type="similarity">
    <text evidence="1">Belongs to the universal ribosomal protein uS7 family.</text>
</comment>
<feature type="chain" id="PRO_0000241771" description="Small ribosomal subunit protein uS7">
    <location>
        <begin position="1"/>
        <end position="156"/>
    </location>
</feature>
<reference key="1">
    <citation type="submission" date="2006-03" db="EMBL/GenBank/DDBJ databases">
        <title>Complete sequence of Rhodopseudomonas palustris BisB18.</title>
        <authorList>
            <consortium name="US DOE Joint Genome Institute"/>
            <person name="Copeland A."/>
            <person name="Lucas S."/>
            <person name="Lapidus A."/>
            <person name="Barry K."/>
            <person name="Detter J.C."/>
            <person name="Glavina del Rio T."/>
            <person name="Hammon N."/>
            <person name="Israni S."/>
            <person name="Dalin E."/>
            <person name="Tice H."/>
            <person name="Pitluck S."/>
            <person name="Chain P."/>
            <person name="Malfatti S."/>
            <person name="Shin M."/>
            <person name="Vergez L."/>
            <person name="Schmutz J."/>
            <person name="Larimer F."/>
            <person name="Land M."/>
            <person name="Hauser L."/>
            <person name="Pelletier D.A."/>
            <person name="Kyrpides N."/>
            <person name="Anderson I."/>
            <person name="Oda Y."/>
            <person name="Harwood C.S."/>
            <person name="Richardson P."/>
        </authorList>
    </citation>
    <scope>NUCLEOTIDE SEQUENCE [LARGE SCALE GENOMIC DNA]</scope>
    <source>
        <strain>BisB18</strain>
    </source>
</reference>
<sequence>MSRRHSAEKREVNPDPKFGNVILTKFMNSVMYAGKKSVAEGIVYGALEIIEAKTKQGPLPVFEQALENVMPTIEVRSRRVGGATYQVPVEVRSVRRQALGIRWLISAARDRNEKTMTERLSAELLDASNGRGNAVKKREDVHRMAEANRAFSHYRW</sequence>
<proteinExistence type="inferred from homology"/>
<dbReference type="EMBL" id="CP000301">
    <property type="protein sequence ID" value="ABD88992.1"/>
    <property type="molecule type" value="Genomic_DNA"/>
</dbReference>
<dbReference type="SMR" id="Q211E4"/>
<dbReference type="STRING" id="316056.RPC_3452"/>
<dbReference type="KEGG" id="rpc:RPC_3452"/>
<dbReference type="eggNOG" id="COG0049">
    <property type="taxonomic scope" value="Bacteria"/>
</dbReference>
<dbReference type="HOGENOM" id="CLU_072226_1_1_5"/>
<dbReference type="OrthoDB" id="9807653at2"/>
<dbReference type="GO" id="GO:0015935">
    <property type="term" value="C:small ribosomal subunit"/>
    <property type="evidence" value="ECO:0007669"/>
    <property type="project" value="InterPro"/>
</dbReference>
<dbReference type="GO" id="GO:0019843">
    <property type="term" value="F:rRNA binding"/>
    <property type="evidence" value="ECO:0007669"/>
    <property type="project" value="UniProtKB-UniRule"/>
</dbReference>
<dbReference type="GO" id="GO:0003735">
    <property type="term" value="F:structural constituent of ribosome"/>
    <property type="evidence" value="ECO:0007669"/>
    <property type="project" value="InterPro"/>
</dbReference>
<dbReference type="GO" id="GO:0000049">
    <property type="term" value="F:tRNA binding"/>
    <property type="evidence" value="ECO:0007669"/>
    <property type="project" value="UniProtKB-UniRule"/>
</dbReference>
<dbReference type="GO" id="GO:0006412">
    <property type="term" value="P:translation"/>
    <property type="evidence" value="ECO:0007669"/>
    <property type="project" value="UniProtKB-UniRule"/>
</dbReference>
<dbReference type="CDD" id="cd14869">
    <property type="entry name" value="uS7_Bacteria"/>
    <property type="match status" value="1"/>
</dbReference>
<dbReference type="FunFam" id="1.10.455.10:FF:000001">
    <property type="entry name" value="30S ribosomal protein S7"/>
    <property type="match status" value="1"/>
</dbReference>
<dbReference type="Gene3D" id="1.10.455.10">
    <property type="entry name" value="Ribosomal protein S7 domain"/>
    <property type="match status" value="1"/>
</dbReference>
<dbReference type="HAMAP" id="MF_00480_B">
    <property type="entry name" value="Ribosomal_uS7_B"/>
    <property type="match status" value="1"/>
</dbReference>
<dbReference type="InterPro" id="IPR000235">
    <property type="entry name" value="Ribosomal_uS7"/>
</dbReference>
<dbReference type="InterPro" id="IPR005717">
    <property type="entry name" value="Ribosomal_uS7_bac/org-type"/>
</dbReference>
<dbReference type="InterPro" id="IPR020606">
    <property type="entry name" value="Ribosomal_uS7_CS"/>
</dbReference>
<dbReference type="InterPro" id="IPR023798">
    <property type="entry name" value="Ribosomal_uS7_dom"/>
</dbReference>
<dbReference type="InterPro" id="IPR036823">
    <property type="entry name" value="Ribosomal_uS7_dom_sf"/>
</dbReference>
<dbReference type="NCBIfam" id="TIGR01029">
    <property type="entry name" value="rpsG_bact"/>
    <property type="match status" value="1"/>
</dbReference>
<dbReference type="PANTHER" id="PTHR11205">
    <property type="entry name" value="RIBOSOMAL PROTEIN S7"/>
    <property type="match status" value="1"/>
</dbReference>
<dbReference type="Pfam" id="PF00177">
    <property type="entry name" value="Ribosomal_S7"/>
    <property type="match status" value="1"/>
</dbReference>
<dbReference type="PIRSF" id="PIRSF002122">
    <property type="entry name" value="RPS7p_RPS7a_RPS5e_RPS7o"/>
    <property type="match status" value="1"/>
</dbReference>
<dbReference type="SUPFAM" id="SSF47973">
    <property type="entry name" value="Ribosomal protein S7"/>
    <property type="match status" value="1"/>
</dbReference>
<dbReference type="PROSITE" id="PS00052">
    <property type="entry name" value="RIBOSOMAL_S7"/>
    <property type="match status" value="1"/>
</dbReference>
<keyword id="KW-0687">Ribonucleoprotein</keyword>
<keyword id="KW-0689">Ribosomal protein</keyword>
<keyword id="KW-0694">RNA-binding</keyword>
<keyword id="KW-0699">rRNA-binding</keyword>
<keyword id="KW-0820">tRNA-binding</keyword>
<evidence type="ECO:0000255" key="1">
    <source>
        <dbReference type="HAMAP-Rule" id="MF_00480"/>
    </source>
</evidence>
<evidence type="ECO:0000305" key="2"/>
<accession>Q211E4</accession>
<name>RS7_RHOPB</name>
<gene>
    <name evidence="1" type="primary">rpsG</name>
    <name type="ordered locus">RPC_3452</name>
</gene>
<protein>
    <recommendedName>
        <fullName evidence="1">Small ribosomal subunit protein uS7</fullName>
    </recommendedName>
    <alternativeName>
        <fullName evidence="2">30S ribosomal protein S7</fullName>
    </alternativeName>
</protein>